<organism>
    <name type="scientific">Escherichia coli O127:H6 (strain E2348/69 / EPEC)</name>
    <dbReference type="NCBI Taxonomy" id="574521"/>
    <lineage>
        <taxon>Bacteria</taxon>
        <taxon>Pseudomonadati</taxon>
        <taxon>Pseudomonadota</taxon>
        <taxon>Gammaproteobacteria</taxon>
        <taxon>Enterobacterales</taxon>
        <taxon>Enterobacteriaceae</taxon>
        <taxon>Escherichia</taxon>
    </lineage>
</organism>
<keyword id="KW-0067">ATP-binding</keyword>
<keyword id="KW-0436">Ligase</keyword>
<keyword id="KW-0460">Magnesium</keyword>
<keyword id="KW-0464">Manganese</keyword>
<keyword id="KW-0479">Metal-binding</keyword>
<keyword id="KW-0547">Nucleotide-binding</keyword>
<keyword id="KW-0648">Protein biosynthesis</keyword>
<keyword id="KW-1185">Reference proteome</keyword>
<feature type="chain" id="PRO_1000185323" description="Ribosomal protein bS6--L-glutamate ligase">
    <location>
        <begin position="1"/>
        <end position="300"/>
    </location>
</feature>
<feature type="domain" description="ATP-grasp" evidence="1">
    <location>
        <begin position="104"/>
        <end position="287"/>
    </location>
</feature>
<feature type="binding site" evidence="1">
    <location>
        <position position="141"/>
    </location>
    <ligand>
        <name>ATP</name>
        <dbReference type="ChEBI" id="CHEBI:30616"/>
    </ligand>
</feature>
<feature type="binding site" evidence="1">
    <location>
        <begin position="178"/>
        <end position="179"/>
    </location>
    <ligand>
        <name>ATP</name>
        <dbReference type="ChEBI" id="CHEBI:30616"/>
    </ligand>
</feature>
<feature type="binding site" evidence="1">
    <location>
        <position position="187"/>
    </location>
    <ligand>
        <name>ATP</name>
        <dbReference type="ChEBI" id="CHEBI:30616"/>
    </ligand>
</feature>
<feature type="binding site" evidence="1">
    <location>
        <begin position="211"/>
        <end position="213"/>
    </location>
    <ligand>
        <name>ATP</name>
        <dbReference type="ChEBI" id="CHEBI:30616"/>
    </ligand>
</feature>
<feature type="binding site" evidence="1">
    <location>
        <position position="248"/>
    </location>
    <ligand>
        <name>Mg(2+)</name>
        <dbReference type="ChEBI" id="CHEBI:18420"/>
        <label>1</label>
    </ligand>
</feature>
<feature type="binding site" evidence="1">
    <location>
        <position position="248"/>
    </location>
    <ligand>
        <name>Mn(2+)</name>
        <dbReference type="ChEBI" id="CHEBI:29035"/>
        <label>1</label>
    </ligand>
</feature>
<feature type="binding site" evidence="1">
    <location>
        <position position="260"/>
    </location>
    <ligand>
        <name>Mg(2+)</name>
        <dbReference type="ChEBI" id="CHEBI:18420"/>
        <label>1</label>
    </ligand>
</feature>
<feature type="binding site" evidence="1">
    <location>
        <position position="260"/>
    </location>
    <ligand>
        <name>Mg(2+)</name>
        <dbReference type="ChEBI" id="CHEBI:18420"/>
        <label>2</label>
    </ligand>
</feature>
<feature type="binding site" evidence="1">
    <location>
        <position position="260"/>
    </location>
    <ligand>
        <name>Mn(2+)</name>
        <dbReference type="ChEBI" id="CHEBI:29035"/>
        <label>1</label>
    </ligand>
</feature>
<feature type="binding site" evidence="1">
    <location>
        <position position="260"/>
    </location>
    <ligand>
        <name>Mn(2+)</name>
        <dbReference type="ChEBI" id="CHEBI:29035"/>
        <label>2</label>
    </ligand>
</feature>
<feature type="binding site" evidence="1">
    <location>
        <position position="262"/>
    </location>
    <ligand>
        <name>Mg(2+)</name>
        <dbReference type="ChEBI" id="CHEBI:18420"/>
        <label>2</label>
    </ligand>
</feature>
<feature type="binding site" evidence="1">
    <location>
        <position position="262"/>
    </location>
    <ligand>
        <name>Mn(2+)</name>
        <dbReference type="ChEBI" id="CHEBI:29035"/>
        <label>2</label>
    </ligand>
</feature>
<protein>
    <recommendedName>
        <fullName evidence="1">Ribosomal protein bS6--L-glutamate ligase</fullName>
        <ecNumber evidence="1">6.3.2.-</ecNumber>
    </recommendedName>
    <alternativeName>
        <fullName evidence="1">Poly-alpha-glutamate synthase</fullName>
    </alternativeName>
    <alternativeName>
        <fullName evidence="1">Ribosomal protein bS6 modification protein</fullName>
    </alternativeName>
</protein>
<dbReference type="EC" id="6.3.2.-" evidence="1"/>
<dbReference type="EMBL" id="FM180568">
    <property type="protein sequence ID" value="CAS08397.1"/>
    <property type="molecule type" value="Genomic_DNA"/>
</dbReference>
<dbReference type="RefSeq" id="WP_000684321.1">
    <property type="nucleotide sequence ID" value="NC_011601.1"/>
</dbReference>
<dbReference type="SMR" id="B7UMU4"/>
<dbReference type="GeneID" id="93776570"/>
<dbReference type="KEGG" id="ecg:E2348C_0849"/>
<dbReference type="HOGENOM" id="CLU_054353_0_1_6"/>
<dbReference type="Proteomes" id="UP000008205">
    <property type="component" value="Chromosome"/>
</dbReference>
<dbReference type="GO" id="GO:0005737">
    <property type="term" value="C:cytoplasm"/>
    <property type="evidence" value="ECO:0007669"/>
    <property type="project" value="TreeGrafter"/>
</dbReference>
<dbReference type="GO" id="GO:0005524">
    <property type="term" value="F:ATP binding"/>
    <property type="evidence" value="ECO:0007669"/>
    <property type="project" value="UniProtKB-UniRule"/>
</dbReference>
<dbReference type="GO" id="GO:0046872">
    <property type="term" value="F:metal ion binding"/>
    <property type="evidence" value="ECO:0007669"/>
    <property type="project" value="UniProtKB-KW"/>
</dbReference>
<dbReference type="GO" id="GO:0018169">
    <property type="term" value="F:ribosomal S6-glutamic acid ligase activity"/>
    <property type="evidence" value="ECO:0007669"/>
    <property type="project" value="UniProtKB-UniRule"/>
</dbReference>
<dbReference type="GO" id="GO:0036211">
    <property type="term" value="P:protein modification process"/>
    <property type="evidence" value="ECO:0007669"/>
    <property type="project" value="InterPro"/>
</dbReference>
<dbReference type="GO" id="GO:0009432">
    <property type="term" value="P:SOS response"/>
    <property type="evidence" value="ECO:0007669"/>
    <property type="project" value="TreeGrafter"/>
</dbReference>
<dbReference type="GO" id="GO:0006412">
    <property type="term" value="P:translation"/>
    <property type="evidence" value="ECO:0007669"/>
    <property type="project" value="UniProtKB-KW"/>
</dbReference>
<dbReference type="FunFam" id="3.40.50.20:FF:000004">
    <property type="entry name" value="Probable alpha-L-glutamate ligase"/>
    <property type="match status" value="1"/>
</dbReference>
<dbReference type="FunFam" id="3.30.1490.20:FF:000005">
    <property type="entry name" value="Probable alpha-L-glutamate ligase 1"/>
    <property type="match status" value="1"/>
</dbReference>
<dbReference type="FunFam" id="3.30.470.20:FF:000016">
    <property type="entry name" value="Ribosomal protein S6--L-glutamate ligase"/>
    <property type="match status" value="1"/>
</dbReference>
<dbReference type="Gene3D" id="3.40.50.20">
    <property type="match status" value="1"/>
</dbReference>
<dbReference type="Gene3D" id="3.30.1490.20">
    <property type="entry name" value="ATP-grasp fold, A domain"/>
    <property type="match status" value="1"/>
</dbReference>
<dbReference type="Gene3D" id="3.30.470.20">
    <property type="entry name" value="ATP-grasp fold, B domain"/>
    <property type="match status" value="1"/>
</dbReference>
<dbReference type="HAMAP" id="MF_01552">
    <property type="entry name" value="RimK"/>
    <property type="match status" value="1"/>
</dbReference>
<dbReference type="InterPro" id="IPR011761">
    <property type="entry name" value="ATP-grasp"/>
</dbReference>
<dbReference type="InterPro" id="IPR013651">
    <property type="entry name" value="ATP-grasp_RimK-type"/>
</dbReference>
<dbReference type="InterPro" id="IPR013815">
    <property type="entry name" value="ATP_grasp_subdomain_1"/>
</dbReference>
<dbReference type="InterPro" id="IPR023533">
    <property type="entry name" value="RimK"/>
</dbReference>
<dbReference type="InterPro" id="IPR041107">
    <property type="entry name" value="Rimk_N"/>
</dbReference>
<dbReference type="InterPro" id="IPR004666">
    <property type="entry name" value="Rp_bS6_RimK/Lys_biosynth_LsyX"/>
</dbReference>
<dbReference type="NCBIfam" id="NF007764">
    <property type="entry name" value="PRK10446.1"/>
    <property type="match status" value="1"/>
</dbReference>
<dbReference type="NCBIfam" id="TIGR00768">
    <property type="entry name" value="rimK_fam"/>
    <property type="match status" value="1"/>
</dbReference>
<dbReference type="PANTHER" id="PTHR21621:SF7">
    <property type="entry name" value="RIBOSOMAL PROTEIN BS6--L-GLUTAMATE LIGASE"/>
    <property type="match status" value="1"/>
</dbReference>
<dbReference type="PANTHER" id="PTHR21621">
    <property type="entry name" value="RIBOSOMAL PROTEIN S6 MODIFICATION PROTEIN"/>
    <property type="match status" value="1"/>
</dbReference>
<dbReference type="Pfam" id="PF08443">
    <property type="entry name" value="RimK"/>
    <property type="match status" value="1"/>
</dbReference>
<dbReference type="Pfam" id="PF18030">
    <property type="entry name" value="Rimk_N"/>
    <property type="match status" value="1"/>
</dbReference>
<dbReference type="SUPFAM" id="SSF56059">
    <property type="entry name" value="Glutathione synthetase ATP-binding domain-like"/>
    <property type="match status" value="1"/>
</dbReference>
<dbReference type="PROSITE" id="PS50975">
    <property type="entry name" value="ATP_GRASP"/>
    <property type="match status" value="1"/>
</dbReference>
<reference key="1">
    <citation type="journal article" date="2009" name="J. Bacteriol.">
        <title>Complete genome sequence and comparative genome analysis of enteropathogenic Escherichia coli O127:H6 strain E2348/69.</title>
        <authorList>
            <person name="Iguchi A."/>
            <person name="Thomson N.R."/>
            <person name="Ogura Y."/>
            <person name="Saunders D."/>
            <person name="Ooka T."/>
            <person name="Henderson I.R."/>
            <person name="Harris D."/>
            <person name="Asadulghani M."/>
            <person name="Kurokawa K."/>
            <person name="Dean P."/>
            <person name="Kenny B."/>
            <person name="Quail M.A."/>
            <person name="Thurston S."/>
            <person name="Dougan G."/>
            <person name="Hayashi T."/>
            <person name="Parkhill J."/>
            <person name="Frankel G."/>
        </authorList>
    </citation>
    <scope>NUCLEOTIDE SEQUENCE [LARGE SCALE GENOMIC DNA]</scope>
    <source>
        <strain>E2348/69 / EPEC</strain>
    </source>
</reference>
<comment type="function">
    <text evidence="1">An L-glutamate ligase that catalyzes the ATP-dependent post-translational addition of glutamate residues to the C-terminus of ribosomal protein bS6 (RpsF). Is also able to catalyze the synthesis of poly-alpha-glutamate in vitro, via ATP hydrolysis from unprotected glutamate as substrate. The number of glutamate residues added to either RpsF or to poly-alpha-glutamate changes with pH.</text>
</comment>
<comment type="cofactor">
    <cofactor evidence="1">
        <name>Mg(2+)</name>
        <dbReference type="ChEBI" id="CHEBI:18420"/>
    </cofactor>
    <cofactor evidence="1">
        <name>Mn(2+)</name>
        <dbReference type="ChEBI" id="CHEBI:29035"/>
    </cofactor>
    <text evidence="1">Binds 2 magnesium or manganese ions per subunit.</text>
</comment>
<comment type="similarity">
    <text evidence="1">Belongs to the RimK family.</text>
</comment>
<gene>
    <name evidence="1" type="primary">rimK</name>
    <name type="ordered locus">E2348C_0849</name>
</gene>
<name>RIMK_ECO27</name>
<evidence type="ECO:0000255" key="1">
    <source>
        <dbReference type="HAMAP-Rule" id="MF_01552"/>
    </source>
</evidence>
<proteinExistence type="inferred from homology"/>
<accession>B7UMU4</accession>
<sequence length="300" mass="32436">MKIAILSRDGTLYSCKRLREAAIQRGHLVEILDPLSCYMNINPAASSIHYKGRKLPHFDAVIPRIGTAITFYGTAALRQFEMLGSYPLNESVAIARARDKLRSMQLLARQGIDLPVTGIAHSPDDTSDLIDMVGGAPLVVKLVEGTQGIGVVLAETRQAAESVIDAFRGLNAHILVQEYIKEAQGCDIRCLVVGDEVVAAIERRAKEGDFRSNLHRGGAASVASITPQEREIAIKAARTMALDVAGVDILRANRGPLVMEVNASPGLEGIEKTTGIDIAGKMIRWIERHATTEYCLKTGG</sequence>